<reference key="1">
    <citation type="journal article" date="2009" name="Genome Biol.">
        <title>Genomic and genetic analyses of diversity and plant interactions of Pseudomonas fluorescens.</title>
        <authorList>
            <person name="Silby M.W."/>
            <person name="Cerdeno-Tarraga A.M."/>
            <person name="Vernikos G.S."/>
            <person name="Giddens S.R."/>
            <person name="Jackson R.W."/>
            <person name="Preston G.M."/>
            <person name="Zhang X.-X."/>
            <person name="Moon C.D."/>
            <person name="Gehrig S.M."/>
            <person name="Godfrey S.A.C."/>
            <person name="Knight C.G."/>
            <person name="Malone J.G."/>
            <person name="Robinson Z."/>
            <person name="Spiers A.J."/>
            <person name="Harris S."/>
            <person name="Challis G.L."/>
            <person name="Yaxley A.M."/>
            <person name="Harris D."/>
            <person name="Seeger K."/>
            <person name="Murphy L."/>
            <person name="Rutter S."/>
            <person name="Squares R."/>
            <person name="Quail M.A."/>
            <person name="Saunders E."/>
            <person name="Mavromatis K."/>
            <person name="Brettin T.S."/>
            <person name="Bentley S.D."/>
            <person name="Hothersall J."/>
            <person name="Stephens E."/>
            <person name="Thomas C.M."/>
            <person name="Parkhill J."/>
            <person name="Levy S.B."/>
            <person name="Rainey P.B."/>
            <person name="Thomson N.R."/>
        </authorList>
    </citation>
    <scope>NUCLEOTIDE SEQUENCE [LARGE SCALE GENOMIC DNA]</scope>
    <source>
        <strain>SBW25</strain>
    </source>
</reference>
<gene>
    <name evidence="1" type="primary">dcd</name>
    <name type="ordered locus">PFLU_1304</name>
</gene>
<protein>
    <recommendedName>
        <fullName evidence="1">dCTP deaminase</fullName>
        <ecNumber evidence="1">3.5.4.13</ecNumber>
    </recommendedName>
    <alternativeName>
        <fullName evidence="1">Deoxycytidine triphosphate deaminase</fullName>
    </alternativeName>
</protein>
<sequence>MSIKSDKWIRRMAQEHGMIEPFVERQIRGEGDERVISYGVSSYGYDVRCADEFKVFTNINSAIVDPKNFDEKSFVDVKSDVCIIPPNSFALARTVEFFRIPRDVLTICLGKSTYARCGIIVNVTPLEPEWEGHVTLEFSNTTTLPAKIYANEGVAQMLFLQSDEACEVSYKDRAGKYQGQRGVTLPRA</sequence>
<name>DCD_PSEFS</name>
<organism>
    <name type="scientific">Pseudomonas fluorescens (strain SBW25)</name>
    <dbReference type="NCBI Taxonomy" id="216595"/>
    <lineage>
        <taxon>Bacteria</taxon>
        <taxon>Pseudomonadati</taxon>
        <taxon>Pseudomonadota</taxon>
        <taxon>Gammaproteobacteria</taxon>
        <taxon>Pseudomonadales</taxon>
        <taxon>Pseudomonadaceae</taxon>
        <taxon>Pseudomonas</taxon>
    </lineage>
</organism>
<accession>C3K710</accession>
<comment type="function">
    <text evidence="1">Catalyzes the deamination of dCTP to dUTP.</text>
</comment>
<comment type="catalytic activity">
    <reaction evidence="1">
        <text>dCTP + H2O + H(+) = dUTP + NH4(+)</text>
        <dbReference type="Rhea" id="RHEA:22680"/>
        <dbReference type="ChEBI" id="CHEBI:15377"/>
        <dbReference type="ChEBI" id="CHEBI:15378"/>
        <dbReference type="ChEBI" id="CHEBI:28938"/>
        <dbReference type="ChEBI" id="CHEBI:61481"/>
        <dbReference type="ChEBI" id="CHEBI:61555"/>
        <dbReference type="EC" id="3.5.4.13"/>
    </reaction>
</comment>
<comment type="pathway">
    <text evidence="1">Pyrimidine metabolism; dUMP biosynthesis; dUMP from dCTP (dUTP route): step 1/2.</text>
</comment>
<comment type="subunit">
    <text evidence="1">Homotrimer.</text>
</comment>
<comment type="similarity">
    <text evidence="1">Belongs to the dCTP deaminase family.</text>
</comment>
<feature type="chain" id="PRO_1000203363" description="dCTP deaminase">
    <location>
        <begin position="1"/>
        <end position="188"/>
    </location>
</feature>
<feature type="active site" description="Proton donor/acceptor" evidence="1">
    <location>
        <position position="137"/>
    </location>
</feature>
<feature type="binding site" evidence="1">
    <location>
        <begin position="111"/>
        <end position="116"/>
    </location>
    <ligand>
        <name>dCTP</name>
        <dbReference type="ChEBI" id="CHEBI:61481"/>
    </ligand>
</feature>
<feature type="binding site" evidence="1">
    <location>
        <begin position="135"/>
        <end position="137"/>
    </location>
    <ligand>
        <name>dCTP</name>
        <dbReference type="ChEBI" id="CHEBI:61481"/>
    </ligand>
</feature>
<feature type="binding site" evidence="1">
    <location>
        <position position="156"/>
    </location>
    <ligand>
        <name>dCTP</name>
        <dbReference type="ChEBI" id="CHEBI:61481"/>
    </ligand>
</feature>
<feature type="binding site" evidence="1">
    <location>
        <position position="170"/>
    </location>
    <ligand>
        <name>dCTP</name>
        <dbReference type="ChEBI" id="CHEBI:61481"/>
    </ligand>
</feature>
<feature type="binding site" evidence="1">
    <location>
        <position position="180"/>
    </location>
    <ligand>
        <name>dCTP</name>
        <dbReference type="ChEBI" id="CHEBI:61481"/>
    </ligand>
</feature>
<keyword id="KW-0378">Hydrolase</keyword>
<keyword id="KW-0546">Nucleotide metabolism</keyword>
<keyword id="KW-0547">Nucleotide-binding</keyword>
<evidence type="ECO:0000255" key="1">
    <source>
        <dbReference type="HAMAP-Rule" id="MF_00146"/>
    </source>
</evidence>
<proteinExistence type="inferred from homology"/>
<dbReference type="EC" id="3.5.4.13" evidence="1"/>
<dbReference type="EMBL" id="AM181176">
    <property type="protein sequence ID" value="CAY47560.1"/>
    <property type="molecule type" value="Genomic_DNA"/>
</dbReference>
<dbReference type="RefSeq" id="WP_003189215.1">
    <property type="nucleotide sequence ID" value="NC_012660.1"/>
</dbReference>
<dbReference type="SMR" id="C3K710"/>
<dbReference type="STRING" id="294.SRM1_01218"/>
<dbReference type="GeneID" id="93462920"/>
<dbReference type="eggNOG" id="COG0717">
    <property type="taxonomic scope" value="Bacteria"/>
</dbReference>
<dbReference type="HOGENOM" id="CLU_087476_4_0_6"/>
<dbReference type="OrthoDB" id="9780956at2"/>
<dbReference type="UniPathway" id="UPA00610">
    <property type="reaction ID" value="UER00665"/>
</dbReference>
<dbReference type="GO" id="GO:0008829">
    <property type="term" value="F:dCTP deaminase activity"/>
    <property type="evidence" value="ECO:0007669"/>
    <property type="project" value="UniProtKB-UniRule"/>
</dbReference>
<dbReference type="GO" id="GO:0000166">
    <property type="term" value="F:nucleotide binding"/>
    <property type="evidence" value="ECO:0007669"/>
    <property type="project" value="UniProtKB-KW"/>
</dbReference>
<dbReference type="GO" id="GO:0006226">
    <property type="term" value="P:dUMP biosynthetic process"/>
    <property type="evidence" value="ECO:0007669"/>
    <property type="project" value="UniProtKB-UniPathway"/>
</dbReference>
<dbReference type="GO" id="GO:0006229">
    <property type="term" value="P:dUTP biosynthetic process"/>
    <property type="evidence" value="ECO:0007669"/>
    <property type="project" value="UniProtKB-UniRule"/>
</dbReference>
<dbReference type="GO" id="GO:0015949">
    <property type="term" value="P:nucleobase-containing small molecule interconversion"/>
    <property type="evidence" value="ECO:0007669"/>
    <property type="project" value="TreeGrafter"/>
</dbReference>
<dbReference type="CDD" id="cd07557">
    <property type="entry name" value="trimeric_dUTPase"/>
    <property type="match status" value="1"/>
</dbReference>
<dbReference type="FunFam" id="2.70.40.10:FF:000001">
    <property type="entry name" value="dCTP deaminase"/>
    <property type="match status" value="1"/>
</dbReference>
<dbReference type="Gene3D" id="2.70.40.10">
    <property type="match status" value="1"/>
</dbReference>
<dbReference type="HAMAP" id="MF_00146">
    <property type="entry name" value="dCTP_deaminase"/>
    <property type="match status" value="1"/>
</dbReference>
<dbReference type="InterPro" id="IPR011962">
    <property type="entry name" value="dCTP_deaminase"/>
</dbReference>
<dbReference type="InterPro" id="IPR036157">
    <property type="entry name" value="dUTPase-like_sf"/>
</dbReference>
<dbReference type="InterPro" id="IPR033704">
    <property type="entry name" value="dUTPase_trimeric"/>
</dbReference>
<dbReference type="NCBIfam" id="TIGR02274">
    <property type="entry name" value="dCTP_deam"/>
    <property type="match status" value="1"/>
</dbReference>
<dbReference type="PANTHER" id="PTHR42680">
    <property type="entry name" value="DCTP DEAMINASE"/>
    <property type="match status" value="1"/>
</dbReference>
<dbReference type="PANTHER" id="PTHR42680:SF3">
    <property type="entry name" value="DCTP DEAMINASE"/>
    <property type="match status" value="1"/>
</dbReference>
<dbReference type="Pfam" id="PF22769">
    <property type="entry name" value="DCD"/>
    <property type="match status" value="1"/>
</dbReference>
<dbReference type="SUPFAM" id="SSF51283">
    <property type="entry name" value="dUTPase-like"/>
    <property type="match status" value="1"/>
</dbReference>